<reference key="1">
    <citation type="submission" date="1996-04" db="EMBL/GenBank/DDBJ databases">
        <authorList>
            <person name="Bonner T.I."/>
            <person name="Matsuda L.A."/>
        </authorList>
    </citation>
    <scope>NUCLEOTIDE SEQUENCE [MRNA] (ISOFORM 2)</scope>
</reference>
<reference key="2">
    <citation type="journal article" date="2005" name="Science">
        <title>The transcriptional landscape of the mammalian genome.</title>
        <authorList>
            <person name="Carninci P."/>
            <person name="Kasukawa T."/>
            <person name="Katayama S."/>
            <person name="Gough J."/>
            <person name="Frith M.C."/>
            <person name="Maeda N."/>
            <person name="Oyama R."/>
            <person name="Ravasi T."/>
            <person name="Lenhard B."/>
            <person name="Wells C."/>
            <person name="Kodzius R."/>
            <person name="Shimokawa K."/>
            <person name="Bajic V.B."/>
            <person name="Brenner S.E."/>
            <person name="Batalov S."/>
            <person name="Forrest A.R."/>
            <person name="Zavolan M."/>
            <person name="Davis M.J."/>
            <person name="Wilming L.G."/>
            <person name="Aidinis V."/>
            <person name="Allen J.E."/>
            <person name="Ambesi-Impiombato A."/>
            <person name="Apweiler R."/>
            <person name="Aturaliya R.N."/>
            <person name="Bailey T.L."/>
            <person name="Bansal M."/>
            <person name="Baxter L."/>
            <person name="Beisel K.W."/>
            <person name="Bersano T."/>
            <person name="Bono H."/>
            <person name="Chalk A.M."/>
            <person name="Chiu K.P."/>
            <person name="Choudhary V."/>
            <person name="Christoffels A."/>
            <person name="Clutterbuck D.R."/>
            <person name="Crowe M.L."/>
            <person name="Dalla E."/>
            <person name="Dalrymple B.P."/>
            <person name="de Bono B."/>
            <person name="Della Gatta G."/>
            <person name="di Bernardo D."/>
            <person name="Down T."/>
            <person name="Engstrom P."/>
            <person name="Fagiolini M."/>
            <person name="Faulkner G."/>
            <person name="Fletcher C.F."/>
            <person name="Fukushima T."/>
            <person name="Furuno M."/>
            <person name="Futaki S."/>
            <person name="Gariboldi M."/>
            <person name="Georgii-Hemming P."/>
            <person name="Gingeras T.R."/>
            <person name="Gojobori T."/>
            <person name="Green R.E."/>
            <person name="Gustincich S."/>
            <person name="Harbers M."/>
            <person name="Hayashi Y."/>
            <person name="Hensch T.K."/>
            <person name="Hirokawa N."/>
            <person name="Hill D."/>
            <person name="Huminiecki L."/>
            <person name="Iacono M."/>
            <person name="Ikeo K."/>
            <person name="Iwama A."/>
            <person name="Ishikawa T."/>
            <person name="Jakt M."/>
            <person name="Kanapin A."/>
            <person name="Katoh M."/>
            <person name="Kawasawa Y."/>
            <person name="Kelso J."/>
            <person name="Kitamura H."/>
            <person name="Kitano H."/>
            <person name="Kollias G."/>
            <person name="Krishnan S.P."/>
            <person name="Kruger A."/>
            <person name="Kummerfeld S.K."/>
            <person name="Kurochkin I.V."/>
            <person name="Lareau L.F."/>
            <person name="Lazarevic D."/>
            <person name="Lipovich L."/>
            <person name="Liu J."/>
            <person name="Liuni S."/>
            <person name="McWilliam S."/>
            <person name="Madan Babu M."/>
            <person name="Madera M."/>
            <person name="Marchionni L."/>
            <person name="Matsuda H."/>
            <person name="Matsuzawa S."/>
            <person name="Miki H."/>
            <person name="Mignone F."/>
            <person name="Miyake S."/>
            <person name="Morris K."/>
            <person name="Mottagui-Tabar S."/>
            <person name="Mulder N."/>
            <person name="Nakano N."/>
            <person name="Nakauchi H."/>
            <person name="Ng P."/>
            <person name="Nilsson R."/>
            <person name="Nishiguchi S."/>
            <person name="Nishikawa S."/>
            <person name="Nori F."/>
            <person name="Ohara O."/>
            <person name="Okazaki Y."/>
            <person name="Orlando V."/>
            <person name="Pang K.C."/>
            <person name="Pavan W.J."/>
            <person name="Pavesi G."/>
            <person name="Pesole G."/>
            <person name="Petrovsky N."/>
            <person name="Piazza S."/>
            <person name="Reed J."/>
            <person name="Reid J.F."/>
            <person name="Ring B.Z."/>
            <person name="Ringwald M."/>
            <person name="Rost B."/>
            <person name="Ruan Y."/>
            <person name="Salzberg S.L."/>
            <person name="Sandelin A."/>
            <person name="Schneider C."/>
            <person name="Schoenbach C."/>
            <person name="Sekiguchi K."/>
            <person name="Semple C.A."/>
            <person name="Seno S."/>
            <person name="Sessa L."/>
            <person name="Sheng Y."/>
            <person name="Shibata Y."/>
            <person name="Shimada H."/>
            <person name="Shimada K."/>
            <person name="Silva D."/>
            <person name="Sinclair B."/>
            <person name="Sperling S."/>
            <person name="Stupka E."/>
            <person name="Sugiura K."/>
            <person name="Sultana R."/>
            <person name="Takenaka Y."/>
            <person name="Taki K."/>
            <person name="Tammoja K."/>
            <person name="Tan S.L."/>
            <person name="Tang S."/>
            <person name="Taylor M.S."/>
            <person name="Tegner J."/>
            <person name="Teichmann S.A."/>
            <person name="Ueda H.R."/>
            <person name="van Nimwegen E."/>
            <person name="Verardo R."/>
            <person name="Wei C.L."/>
            <person name="Yagi K."/>
            <person name="Yamanishi H."/>
            <person name="Zabarovsky E."/>
            <person name="Zhu S."/>
            <person name="Zimmer A."/>
            <person name="Hide W."/>
            <person name="Bult C."/>
            <person name="Grimmond S.M."/>
            <person name="Teasdale R.D."/>
            <person name="Liu E.T."/>
            <person name="Brusic V."/>
            <person name="Quackenbush J."/>
            <person name="Wahlestedt C."/>
            <person name="Mattick J.S."/>
            <person name="Hume D.A."/>
            <person name="Kai C."/>
            <person name="Sasaki D."/>
            <person name="Tomaru Y."/>
            <person name="Fukuda S."/>
            <person name="Kanamori-Katayama M."/>
            <person name="Suzuki M."/>
            <person name="Aoki J."/>
            <person name="Arakawa T."/>
            <person name="Iida J."/>
            <person name="Imamura K."/>
            <person name="Itoh M."/>
            <person name="Kato T."/>
            <person name="Kawaji H."/>
            <person name="Kawagashira N."/>
            <person name="Kawashima T."/>
            <person name="Kojima M."/>
            <person name="Kondo S."/>
            <person name="Konno H."/>
            <person name="Nakano K."/>
            <person name="Ninomiya N."/>
            <person name="Nishio T."/>
            <person name="Okada M."/>
            <person name="Plessy C."/>
            <person name="Shibata K."/>
            <person name="Shiraki T."/>
            <person name="Suzuki S."/>
            <person name="Tagami M."/>
            <person name="Waki K."/>
            <person name="Watahiki A."/>
            <person name="Okamura-Oho Y."/>
            <person name="Suzuki H."/>
            <person name="Kawai J."/>
            <person name="Hayashizaki Y."/>
        </authorList>
    </citation>
    <scope>NUCLEOTIDE SEQUENCE [LARGE SCALE MRNA] (ISOFORM 2)</scope>
    <source>
        <strain>C57BL/6J</strain>
        <tissue>Head</tissue>
        <tissue>Testis</tissue>
    </source>
</reference>
<reference key="3">
    <citation type="journal article" date="2004" name="Genome Res.">
        <title>The status, quality, and expansion of the NIH full-length cDNA project: the Mammalian Gene Collection (MGC).</title>
        <authorList>
            <consortium name="The MGC Project Team"/>
        </authorList>
    </citation>
    <scope>NUCLEOTIDE SEQUENCE [LARGE SCALE MRNA] (ISOFORMS 1 AND 2)</scope>
    <source>
        <strain>C57BL/6J</strain>
        <strain>Czech II</strain>
        <tissue>Embryo</tissue>
        <tissue>Mammary tumor</tissue>
    </source>
</reference>
<reference key="4">
    <citation type="journal article" date="2021" name="Sci. Rep.">
        <title>Gpr19 is a circadian clock-controlled orphan GPCR with a role in modulating free-running period and light resetting capacity of the circadian clock.</title>
        <authorList>
            <person name="Yamaguchi Y."/>
            <person name="Murai I."/>
            <person name="Goto K."/>
            <person name="Doi S."/>
            <person name="Zhou H."/>
            <person name="Setsu G."/>
            <person name="Shimatani H."/>
            <person name="Okamura H."/>
            <person name="Miyake T."/>
            <person name="Doi M."/>
        </authorList>
    </citation>
    <scope>FUNCTION</scope>
    <scope>DISRUPTION PHENOTYPE</scope>
    <scope>TISSUE SPECIFICITY</scope>
</reference>
<reference key="5">
    <citation type="journal article" date="2023" name="Sci. Rep.">
        <title>G-protein coupled receptor 19 (GPR19) knockout mice display sex-dependent metabolic dysfunction.</title>
        <authorList>
            <person name="Mushala B.A.S."/>
            <person name="Xie B."/>
            <person name="Sipula I.J."/>
            <person name="Stoner M.W."/>
            <person name="Thapa D."/>
            <person name="Manning J.R."/>
            <person name="Bugga P."/>
            <person name="Vandevender A.M."/>
            <person name="Jurczak M.J."/>
            <person name="Scott I."/>
        </authorList>
    </citation>
    <scope>FUNCTION</scope>
    <scope>DISRUPTION PHENOTYPE</scope>
</reference>
<sequence length="415" mass="47533">MVFAHRMDNDQPPVVTATLLVPLQNSSCAEAAEALLPHGLMGLHEEHSWMSNRTELQYELNPGEVATASIFFGALWLFSIFGNSLVCLVIHRSRRTQSTTNYFVVSMACADLLISVASTPFVVLQFTTGRWTLGSAMCKVVRYFQYLTPGVQIYVLLSICIDRFYTIVYPLSFKVSREKAKKMIAASWILDAAFVTPVFFFYGSNWDSHCNYFLPPSWEGTAYTVIHFLVGFVIPSILIILFYQKVIKYIWRIGTDGRTLRRTMNIVPRTKVKTVKMFLLLNLVFLFSWLPFHVAQLWHPHEQDYKKSSLVFTAVTWVSFSSSASKPTLYSIYNANFRRGMKETFCMSSMKCYRSNAYTITTSSRMAKRNYVGISEIPPVSRTITKDSIYDSFDREAREKKLAWPINSNPPNTFV</sequence>
<gene>
    <name type="primary">Gpr19</name>
</gene>
<proteinExistence type="evidence at transcript level"/>
<evidence type="ECO:0000250" key="1">
    <source>
        <dbReference type="UniProtKB" id="P70585"/>
    </source>
</evidence>
<evidence type="ECO:0000250" key="2">
    <source>
        <dbReference type="UniProtKB" id="Q15760"/>
    </source>
</evidence>
<evidence type="ECO:0000255" key="3"/>
<evidence type="ECO:0000255" key="4">
    <source>
        <dbReference type="PROSITE-ProRule" id="PRU00521"/>
    </source>
</evidence>
<evidence type="ECO:0000269" key="5">
    <source>
    </source>
</evidence>
<evidence type="ECO:0000269" key="6">
    <source>
    </source>
</evidence>
<evidence type="ECO:0000303" key="7">
    <source>
    </source>
</evidence>
<evidence type="ECO:0000303" key="8">
    <source>
    </source>
</evidence>
<evidence type="ECO:0000303" key="9">
    <source ref="1"/>
</evidence>
<evidence type="ECO:0000305" key="10"/>
<keyword id="KW-0025">Alternative splicing</keyword>
<keyword id="KW-1003">Cell membrane</keyword>
<keyword id="KW-1015">Disulfide bond</keyword>
<keyword id="KW-0297">G-protein coupled receptor</keyword>
<keyword id="KW-0325">Glycoprotein</keyword>
<keyword id="KW-0472">Membrane</keyword>
<keyword id="KW-0675">Receptor</keyword>
<keyword id="KW-1185">Reference proteome</keyword>
<keyword id="KW-0807">Transducer</keyword>
<keyword id="KW-0812">Transmembrane</keyword>
<keyword id="KW-1133">Transmembrane helix</keyword>
<protein>
    <recommendedName>
        <fullName>Probable G-protein coupled receptor 19</fullName>
    </recommendedName>
</protein>
<comment type="function">
    <text evidence="1 2 5 6">G-protein coupled receptor that plays a role in the regulation of circadian rhythms and energy metabolism (PubMed:34789778, PubMed:37061564). Participates in maintaining proper circadian gene expression in the suprachiasmatic nucleus (SCN), the locus of the master circadian clock in the brain (PubMed:34789778). May function as a coordinator of aging-associated metabolic dysfunction, stress response, DNA integrity management, and eventual senescence (By similarity). Upon binding to adropin, modulates mitochondrial energy metabolism via the p44/42-PDK4 signaling pathway, influencing pyruvate dehydrogenase activity (By similarity).</text>
</comment>
<comment type="subcellular location">
    <subcellularLocation>
        <location>Cell membrane</location>
        <topology>Multi-pass membrane protein</topology>
    </subcellularLocation>
</comment>
<comment type="alternative products">
    <event type="alternative splicing"/>
    <isoform>
        <id>Q61121-1</id>
        <name>1</name>
        <sequence type="displayed"/>
    </isoform>
    <isoform>
        <id>Q61121-2</id>
        <name>2</name>
        <sequence type="described" ref="VSP_016527"/>
    </isoform>
</comment>
<comment type="tissue specificity">
    <text evidence="5">Strongly expressed in the brain.</text>
</comment>
<comment type="disruption phenotype">
    <text evidence="5 6">GPR19 deficiency induces a shift in whole-body energy metabolism by increasing energy expenditure and decreasing glucose disposal in a sex-dependent manner. Male GPR19 knockout mice show decreased whole-body glucose tolerance, combined with decreased expression of key hepatic glucose production enzymes, under obese conditions (PubMed:37061564). In addition, Gpr19-deleted mice exhibit a prolonged circadian period and a delayed initiation of daily locomotor activity by causing the downregulation of several genes that normally peak during the night, including Bmal1 and Gpr176 (PubMed:34789778).</text>
</comment>
<comment type="similarity">
    <text evidence="4">Belongs to the G-protein coupled receptor 1 family.</text>
</comment>
<feature type="chain" id="PRO_0000069539" description="Probable G-protein coupled receptor 19">
    <location>
        <begin position="1"/>
        <end position="415"/>
    </location>
</feature>
<feature type="topological domain" description="Extracellular" evidence="3">
    <location>
        <begin position="1"/>
        <end position="69"/>
    </location>
</feature>
<feature type="transmembrane region" description="Helical; Name=1">
    <location>
        <begin position="70"/>
        <end position="90"/>
    </location>
</feature>
<feature type="topological domain" description="Cytoplasmic" evidence="3">
    <location>
        <begin position="91"/>
        <end position="102"/>
    </location>
</feature>
<feature type="transmembrane region" description="Helical; Name=2">
    <location>
        <begin position="103"/>
        <end position="123"/>
    </location>
</feature>
<feature type="topological domain" description="Extracellular" evidence="3">
    <location>
        <begin position="124"/>
        <end position="152"/>
    </location>
</feature>
<feature type="transmembrane region" description="Helical; Name=3">
    <location>
        <begin position="153"/>
        <end position="173"/>
    </location>
</feature>
<feature type="topological domain" description="Cytoplasmic" evidence="3">
    <location>
        <begin position="174"/>
        <end position="182"/>
    </location>
</feature>
<feature type="transmembrane region" description="Helical; Name=4">
    <location>
        <begin position="183"/>
        <end position="203"/>
    </location>
</feature>
<feature type="topological domain" description="Extracellular" evidence="3">
    <location>
        <begin position="204"/>
        <end position="221"/>
    </location>
</feature>
<feature type="transmembrane region" description="Helical; Name=5">
    <location>
        <begin position="222"/>
        <end position="242"/>
    </location>
</feature>
<feature type="topological domain" description="Cytoplasmic" evidence="3">
    <location>
        <begin position="243"/>
        <end position="277"/>
    </location>
</feature>
<feature type="transmembrane region" description="Helical; Name=6">
    <location>
        <begin position="278"/>
        <end position="298"/>
    </location>
</feature>
<feature type="topological domain" description="Extracellular" evidence="3">
    <location>
        <begin position="299"/>
        <end position="309"/>
    </location>
</feature>
<feature type="transmembrane region" description="Helical; Name=7">
    <location>
        <begin position="310"/>
        <end position="332"/>
    </location>
</feature>
<feature type="topological domain" description="Cytoplasmic" evidence="3">
    <location>
        <begin position="333"/>
        <end position="415"/>
    </location>
</feature>
<feature type="glycosylation site" description="N-linked (GlcNAc...) asparagine" evidence="3">
    <location>
        <position position="25"/>
    </location>
</feature>
<feature type="glycosylation site" description="N-linked (GlcNAc...) asparagine" evidence="3">
    <location>
        <position position="52"/>
    </location>
</feature>
<feature type="disulfide bond" evidence="4">
    <location>
        <begin position="138"/>
        <end position="210"/>
    </location>
</feature>
<feature type="splice variant" id="VSP_016527" description="In isoform 2." evidence="7 8 9">
    <location>
        <begin position="1"/>
        <end position="6"/>
    </location>
</feature>
<feature type="sequence conflict" description="In Ref. 1; AAA93354." evidence="10" ref="1">
    <original>S</original>
    <variation>G</variation>
    <location>
        <position position="26"/>
    </location>
</feature>
<feature type="sequence conflict" description="In Ref. 3; AAH50187." evidence="10" ref="3">
    <original>D</original>
    <variation>G</variation>
    <location>
        <position position="304"/>
    </location>
</feature>
<feature type="sequence conflict" description="In Ref. 3; AAH50187." evidence="10" ref="3">
    <original>S</original>
    <variation>P</variation>
    <location>
        <position position="323"/>
    </location>
</feature>
<dbReference type="EMBL" id="U46923">
    <property type="protein sequence ID" value="AAA93354.1"/>
    <property type="molecule type" value="mRNA"/>
</dbReference>
<dbReference type="EMBL" id="AK132917">
    <property type="protein sequence ID" value="BAE21421.1"/>
    <property type="molecule type" value="mRNA"/>
</dbReference>
<dbReference type="EMBL" id="AK140770">
    <property type="protein sequence ID" value="BAE24474.1"/>
    <property type="molecule type" value="mRNA"/>
</dbReference>
<dbReference type="EMBL" id="BC021648">
    <property type="protein sequence ID" value="AAH21648.1"/>
    <property type="molecule type" value="mRNA"/>
</dbReference>
<dbReference type="EMBL" id="BC050187">
    <property type="protein sequence ID" value="AAH50187.1"/>
    <property type="molecule type" value="mRNA"/>
</dbReference>
<dbReference type="CCDS" id="CCDS20641.1">
    <molecule id="Q61121-2"/>
</dbReference>
<dbReference type="CCDS" id="CCDS51937.1">
    <molecule id="Q61121-1"/>
</dbReference>
<dbReference type="RefSeq" id="NP_001161166.1">
    <molecule id="Q61121-1"/>
    <property type="nucleotide sequence ID" value="NM_001167694.3"/>
</dbReference>
<dbReference type="RefSeq" id="NP_001161167.1">
    <molecule id="Q61121-2"/>
    <property type="nucleotide sequence ID" value="NM_001167695.3"/>
</dbReference>
<dbReference type="RefSeq" id="NP_001161168.1">
    <molecule id="Q61121-2"/>
    <property type="nucleotide sequence ID" value="NM_001167696.3"/>
</dbReference>
<dbReference type="RefSeq" id="NP_001161169.1">
    <molecule id="Q61121-1"/>
    <property type="nucleotide sequence ID" value="NM_001167697.3"/>
</dbReference>
<dbReference type="RefSeq" id="NP_001161171.1">
    <molecule id="Q61121-1"/>
    <property type="nucleotide sequence ID" value="NM_001167699.3"/>
</dbReference>
<dbReference type="RefSeq" id="NP_001161172.1">
    <molecule id="Q61121-2"/>
    <property type="nucleotide sequence ID" value="NM_001167700.3"/>
</dbReference>
<dbReference type="RefSeq" id="NP_001348977.1">
    <molecule id="Q61121-2"/>
    <property type="nucleotide sequence ID" value="NM_001362048.2"/>
</dbReference>
<dbReference type="RefSeq" id="NP_001348978.1">
    <molecule id="Q61121-2"/>
    <property type="nucleotide sequence ID" value="NM_001362049.2"/>
</dbReference>
<dbReference type="RefSeq" id="NP_001348979.1">
    <molecule id="Q61121-2"/>
    <property type="nucleotide sequence ID" value="NM_001362050.2"/>
</dbReference>
<dbReference type="RefSeq" id="NP_001348980.1">
    <molecule id="Q61121-2"/>
    <property type="nucleotide sequence ID" value="NM_001362051.2"/>
</dbReference>
<dbReference type="RefSeq" id="NP_001348981.1">
    <molecule id="Q61121-2"/>
    <property type="nucleotide sequence ID" value="NM_001362052.2"/>
</dbReference>
<dbReference type="RefSeq" id="NP_032183.2">
    <molecule id="Q61121-2"/>
    <property type="nucleotide sequence ID" value="NM_008157.4"/>
</dbReference>
<dbReference type="RefSeq" id="XP_006505617.1">
    <property type="nucleotide sequence ID" value="XM_006505554.1"/>
</dbReference>
<dbReference type="RefSeq" id="XP_017176882.1">
    <property type="nucleotide sequence ID" value="XM_017321393.1"/>
</dbReference>
<dbReference type="SMR" id="Q61121"/>
<dbReference type="CORUM" id="Q61121"/>
<dbReference type="FunCoup" id="Q61121">
    <property type="interactions" value="538"/>
</dbReference>
<dbReference type="STRING" id="10090.ENSMUSP00000047630"/>
<dbReference type="GlyCosmos" id="Q61121">
    <property type="glycosylation" value="2 sites, No reported glycans"/>
</dbReference>
<dbReference type="GlyGen" id="Q61121">
    <property type="glycosylation" value="2 sites"/>
</dbReference>
<dbReference type="PhosphoSitePlus" id="Q61121"/>
<dbReference type="PaxDb" id="10090-ENSMUSP00000047630"/>
<dbReference type="ProteomicsDB" id="271270">
    <molecule id="Q61121-1"/>
</dbReference>
<dbReference type="ProteomicsDB" id="271271">
    <molecule id="Q61121-2"/>
</dbReference>
<dbReference type="Antibodypedia" id="2961">
    <property type="antibodies" value="150 antibodies from 30 providers"/>
</dbReference>
<dbReference type="DNASU" id="14760"/>
<dbReference type="Ensembl" id="ENSMUST00000046255.14">
    <molecule id="Q61121-1"/>
    <property type="protein sequence ID" value="ENSMUSP00000047630.8"/>
    <property type="gene ID" value="ENSMUSG00000032641.19"/>
</dbReference>
<dbReference type="Ensembl" id="ENSMUST00000111932.8">
    <molecule id="Q61121-2"/>
    <property type="protein sequence ID" value="ENSMUSP00000107563.2"/>
    <property type="gene ID" value="ENSMUSG00000032641.19"/>
</dbReference>
<dbReference type="Ensembl" id="ENSMUST00000116515.9">
    <molecule id="Q61121-2"/>
    <property type="protein sequence ID" value="ENSMUSP00000112214.3"/>
    <property type="gene ID" value="ENSMUSG00000032641.19"/>
</dbReference>
<dbReference type="Ensembl" id="ENSMUST00000165392.8">
    <molecule id="Q61121-2"/>
    <property type="protein sequence ID" value="ENSMUSP00000127876.2"/>
    <property type="gene ID" value="ENSMUSG00000032641.19"/>
</dbReference>
<dbReference type="GeneID" id="14760"/>
<dbReference type="KEGG" id="mmu:14760"/>
<dbReference type="UCSC" id="uc009ekv.3">
    <molecule id="Q61121-1"/>
    <property type="organism name" value="mouse"/>
</dbReference>
<dbReference type="UCSC" id="uc009eky.3">
    <molecule id="Q61121-2"/>
    <property type="organism name" value="mouse"/>
</dbReference>
<dbReference type="AGR" id="MGI:892973"/>
<dbReference type="CTD" id="2842"/>
<dbReference type="MGI" id="MGI:892973">
    <property type="gene designation" value="Gpr19"/>
</dbReference>
<dbReference type="VEuPathDB" id="HostDB:ENSMUSG00000032641"/>
<dbReference type="eggNOG" id="KOG3656">
    <property type="taxonomic scope" value="Eukaryota"/>
</dbReference>
<dbReference type="GeneTree" id="ENSGT00940000160365"/>
<dbReference type="HOGENOM" id="CLU_009579_20_0_1"/>
<dbReference type="InParanoid" id="Q61121"/>
<dbReference type="OMA" id="QLWHPRE"/>
<dbReference type="OrthoDB" id="34716at9989"/>
<dbReference type="PhylomeDB" id="Q61121"/>
<dbReference type="TreeFam" id="TF331630"/>
<dbReference type="BioGRID-ORCS" id="14760">
    <property type="hits" value="1 hit in 80 CRISPR screens"/>
</dbReference>
<dbReference type="ChiTaRS" id="Gpr19">
    <property type="organism name" value="mouse"/>
</dbReference>
<dbReference type="PRO" id="PR:Q61121"/>
<dbReference type="Proteomes" id="UP000000589">
    <property type="component" value="Chromosome 6"/>
</dbReference>
<dbReference type="RNAct" id="Q61121">
    <property type="molecule type" value="protein"/>
</dbReference>
<dbReference type="Bgee" id="ENSMUSG00000032641">
    <property type="expression patterns" value="Expressed in spermatocyte and 233 other cell types or tissues"/>
</dbReference>
<dbReference type="ExpressionAtlas" id="Q61121">
    <property type="expression patterns" value="baseline and differential"/>
</dbReference>
<dbReference type="GO" id="GO:0005929">
    <property type="term" value="C:cilium"/>
    <property type="evidence" value="ECO:0000314"/>
    <property type="project" value="MGI"/>
</dbReference>
<dbReference type="GO" id="GO:0043005">
    <property type="term" value="C:neuron projection"/>
    <property type="evidence" value="ECO:0000314"/>
    <property type="project" value="MGI"/>
</dbReference>
<dbReference type="GO" id="GO:0005886">
    <property type="term" value="C:plasma membrane"/>
    <property type="evidence" value="ECO:0007669"/>
    <property type="project" value="UniProtKB-SubCell"/>
</dbReference>
<dbReference type="GO" id="GO:0004930">
    <property type="term" value="F:G protein-coupled receptor activity"/>
    <property type="evidence" value="ECO:0007669"/>
    <property type="project" value="UniProtKB-KW"/>
</dbReference>
<dbReference type="CDD" id="cd15008">
    <property type="entry name" value="7tmA_GPR19"/>
    <property type="match status" value="1"/>
</dbReference>
<dbReference type="FunFam" id="1.20.1070.10:FF:000165">
    <property type="entry name" value="Probable G-protein coupled receptor 19"/>
    <property type="match status" value="1"/>
</dbReference>
<dbReference type="Gene3D" id="1.20.1070.10">
    <property type="entry name" value="Rhodopsin 7-helix transmembrane proteins"/>
    <property type="match status" value="1"/>
</dbReference>
<dbReference type="InterPro" id="IPR000276">
    <property type="entry name" value="GPCR_Rhodpsn"/>
</dbReference>
<dbReference type="InterPro" id="IPR017452">
    <property type="entry name" value="GPCR_Rhodpsn_7TM"/>
</dbReference>
<dbReference type="InterPro" id="IPR047829">
    <property type="entry name" value="GPR19_7tmA"/>
</dbReference>
<dbReference type="PANTHER" id="PTHR24243">
    <property type="entry name" value="G-PROTEIN COUPLED RECEPTOR"/>
    <property type="match status" value="1"/>
</dbReference>
<dbReference type="PANTHER" id="PTHR24243:SF224">
    <property type="entry name" value="G-PROTEIN COUPLED RECEPTOR 19-RELATED"/>
    <property type="match status" value="1"/>
</dbReference>
<dbReference type="Pfam" id="PF00001">
    <property type="entry name" value="7tm_1"/>
    <property type="match status" value="1"/>
</dbReference>
<dbReference type="PRINTS" id="PR00237">
    <property type="entry name" value="GPCRRHODOPSN"/>
</dbReference>
<dbReference type="SUPFAM" id="SSF81321">
    <property type="entry name" value="Family A G protein-coupled receptor-like"/>
    <property type="match status" value="1"/>
</dbReference>
<dbReference type="PROSITE" id="PS50262">
    <property type="entry name" value="G_PROTEIN_RECEP_F1_2"/>
    <property type="match status" value="1"/>
</dbReference>
<organism>
    <name type="scientific">Mus musculus</name>
    <name type="common">Mouse</name>
    <dbReference type="NCBI Taxonomy" id="10090"/>
    <lineage>
        <taxon>Eukaryota</taxon>
        <taxon>Metazoa</taxon>
        <taxon>Chordata</taxon>
        <taxon>Craniata</taxon>
        <taxon>Vertebrata</taxon>
        <taxon>Euteleostomi</taxon>
        <taxon>Mammalia</taxon>
        <taxon>Eutheria</taxon>
        <taxon>Euarchontoglires</taxon>
        <taxon>Glires</taxon>
        <taxon>Rodentia</taxon>
        <taxon>Myomorpha</taxon>
        <taxon>Muroidea</taxon>
        <taxon>Muridae</taxon>
        <taxon>Murinae</taxon>
        <taxon>Mus</taxon>
        <taxon>Mus</taxon>
    </lineage>
</organism>
<name>GPR19_MOUSE</name>
<accession>Q61121</accession>
<accession>Q810I4</accession>
<accession>Q8VDJ9</accession>